<keyword id="KW-0489">Methyltransferase</keyword>
<keyword id="KW-0539">Nucleus</keyword>
<keyword id="KW-1185">Reference proteome</keyword>
<keyword id="KW-0694">RNA-binding</keyword>
<keyword id="KW-0949">S-adenosyl-L-methionine</keyword>
<keyword id="KW-0808">Transferase</keyword>
<keyword id="KW-0819">tRNA processing</keyword>
<keyword id="KW-0820">tRNA-binding</keyword>
<organism>
    <name type="scientific">Neurospora crassa (strain ATCC 24698 / 74-OR23-1A / CBS 708.71 / DSM 1257 / FGSC 987)</name>
    <dbReference type="NCBI Taxonomy" id="367110"/>
    <lineage>
        <taxon>Eukaryota</taxon>
        <taxon>Fungi</taxon>
        <taxon>Dikarya</taxon>
        <taxon>Ascomycota</taxon>
        <taxon>Pezizomycotina</taxon>
        <taxon>Sordariomycetes</taxon>
        <taxon>Sordariomycetidae</taxon>
        <taxon>Sordariales</taxon>
        <taxon>Sordariaceae</taxon>
        <taxon>Neurospora</taxon>
    </lineage>
</organism>
<evidence type="ECO:0000255" key="1">
    <source>
        <dbReference type="HAMAP-Rule" id="MF_03055"/>
    </source>
</evidence>
<evidence type="ECO:0000305" key="2"/>
<reference key="1">
    <citation type="journal article" date="2003" name="Nucleic Acids Res.">
        <title>What's in the genome of a filamentous fungus? Analysis of the Neurospora genome sequence.</title>
        <authorList>
            <person name="Mannhaupt G."/>
            <person name="Montrone C."/>
            <person name="Haase D."/>
            <person name="Mewes H.-W."/>
            <person name="Aign V."/>
            <person name="Hoheisel J.D."/>
            <person name="Fartmann B."/>
            <person name="Nyakatura G."/>
            <person name="Kempken F."/>
            <person name="Maier J."/>
            <person name="Schulte U."/>
        </authorList>
    </citation>
    <scope>NUCLEOTIDE SEQUENCE [LARGE SCALE GENOMIC DNA]</scope>
    <source>
        <strain>ATCC 24698 / 74-OR23-1A / CBS 708.71 / DSM 1257 / FGSC 987</strain>
    </source>
</reference>
<reference key="2">
    <citation type="journal article" date="2003" name="Nature">
        <title>The genome sequence of the filamentous fungus Neurospora crassa.</title>
        <authorList>
            <person name="Galagan J.E."/>
            <person name="Calvo S.E."/>
            <person name="Borkovich K.A."/>
            <person name="Selker E.U."/>
            <person name="Read N.D."/>
            <person name="Jaffe D.B."/>
            <person name="FitzHugh W."/>
            <person name="Ma L.-J."/>
            <person name="Smirnov S."/>
            <person name="Purcell S."/>
            <person name="Rehman B."/>
            <person name="Elkins T."/>
            <person name="Engels R."/>
            <person name="Wang S."/>
            <person name="Nielsen C.B."/>
            <person name="Butler J."/>
            <person name="Endrizzi M."/>
            <person name="Qui D."/>
            <person name="Ianakiev P."/>
            <person name="Bell-Pedersen D."/>
            <person name="Nelson M.A."/>
            <person name="Werner-Washburne M."/>
            <person name="Selitrennikoff C.P."/>
            <person name="Kinsey J.A."/>
            <person name="Braun E.L."/>
            <person name="Zelter A."/>
            <person name="Schulte U."/>
            <person name="Kothe G.O."/>
            <person name="Jedd G."/>
            <person name="Mewes H.-W."/>
            <person name="Staben C."/>
            <person name="Marcotte E."/>
            <person name="Greenberg D."/>
            <person name="Roy A."/>
            <person name="Foley K."/>
            <person name="Naylor J."/>
            <person name="Stange-Thomann N."/>
            <person name="Barrett R."/>
            <person name="Gnerre S."/>
            <person name="Kamal M."/>
            <person name="Kamvysselis M."/>
            <person name="Mauceli E.W."/>
            <person name="Bielke C."/>
            <person name="Rudd S."/>
            <person name="Frishman D."/>
            <person name="Krystofova S."/>
            <person name="Rasmussen C."/>
            <person name="Metzenberg R.L."/>
            <person name="Perkins D.D."/>
            <person name="Kroken S."/>
            <person name="Cogoni C."/>
            <person name="Macino G."/>
            <person name="Catcheside D.E.A."/>
            <person name="Li W."/>
            <person name="Pratt R.J."/>
            <person name="Osmani S.A."/>
            <person name="DeSouza C.P.C."/>
            <person name="Glass N.L."/>
            <person name="Orbach M.J."/>
            <person name="Berglund J.A."/>
            <person name="Voelker R."/>
            <person name="Yarden O."/>
            <person name="Plamann M."/>
            <person name="Seiler S."/>
            <person name="Dunlap J.C."/>
            <person name="Radford A."/>
            <person name="Aramayo R."/>
            <person name="Natvig D.O."/>
            <person name="Alex L.A."/>
            <person name="Mannhaupt G."/>
            <person name="Ebbole D.J."/>
            <person name="Freitag M."/>
            <person name="Paulsen I."/>
            <person name="Sachs M.S."/>
            <person name="Lander E.S."/>
            <person name="Nusbaum C."/>
            <person name="Birren B.W."/>
        </authorList>
    </citation>
    <scope>NUCLEOTIDE SEQUENCE [LARGE SCALE GENOMIC DNA]</scope>
    <source>
        <strain>ATCC 24698 / 74-OR23-1A / CBS 708.71 / DSM 1257 / FGSC 987</strain>
    </source>
</reference>
<sequence length="293" mass="33733">MSEPKNKRQKREDYRAALRANGVTELPRKKFYRQRAHANPFSDHSLIYPPTPEQMDWASLYPHYAVEEPIEQKTETTESEESTGQELSAPAIRKLTKQVEVADIGCGFGGLLIALAPVLPETLVLGLEIRVSVTQFVEDRIKALRVQNEEQKLYRNIAVLRANTMKFMPNFFNKGQLNKIFICFPDPHFKARKHKQRIVSTTLNSEYAYVLRPGGIVYTITDVPDLHEWMVGHFNAHPAFERVSVEEQEADPLVEIMRNETEEGKKVTRHNGQKHVALFRRLEDPQWPEDVSA</sequence>
<dbReference type="EC" id="2.1.1.33" evidence="1"/>
<dbReference type="EMBL" id="BX908812">
    <property type="protein sequence ID" value="CAF06164.1"/>
    <property type="status" value="ALT_SEQ"/>
    <property type="molecule type" value="Genomic_DNA"/>
</dbReference>
<dbReference type="EMBL" id="CM002241">
    <property type="protein sequence ID" value="EAA28339.1"/>
    <property type="molecule type" value="Genomic_DNA"/>
</dbReference>
<dbReference type="RefSeq" id="XP_957575.1">
    <property type="nucleotide sequence ID" value="XM_952482.2"/>
</dbReference>
<dbReference type="SMR" id="Q7RZC1"/>
<dbReference type="FunCoup" id="Q7RZC1">
    <property type="interactions" value="520"/>
</dbReference>
<dbReference type="STRING" id="367110.Q7RZC1"/>
<dbReference type="PaxDb" id="5141-EFNCRP00000003704"/>
<dbReference type="EnsemblFungi" id="EAA28339">
    <property type="protein sequence ID" value="EAA28339"/>
    <property type="gene ID" value="NCU03936"/>
</dbReference>
<dbReference type="GeneID" id="3873713"/>
<dbReference type="KEGG" id="ncr:NCU03936"/>
<dbReference type="VEuPathDB" id="FungiDB:NCU03936"/>
<dbReference type="HOGENOM" id="CLU_050910_3_1_1"/>
<dbReference type="InParanoid" id="Q7RZC1"/>
<dbReference type="OMA" id="LPNYFAK"/>
<dbReference type="OrthoDB" id="47276at2759"/>
<dbReference type="UniPathway" id="UPA00989"/>
<dbReference type="Proteomes" id="UP000001805">
    <property type="component" value="Chromosome 5, Linkage Group VI"/>
</dbReference>
<dbReference type="GO" id="GO:0005634">
    <property type="term" value="C:nucleus"/>
    <property type="evidence" value="ECO:0007669"/>
    <property type="project" value="UniProtKB-SubCell"/>
</dbReference>
<dbReference type="GO" id="GO:0043527">
    <property type="term" value="C:tRNA methyltransferase complex"/>
    <property type="evidence" value="ECO:0000318"/>
    <property type="project" value="GO_Central"/>
</dbReference>
<dbReference type="GO" id="GO:0008176">
    <property type="term" value="F:tRNA (guanine(46)-N7)-methyltransferase activity"/>
    <property type="evidence" value="ECO:0000318"/>
    <property type="project" value="GO_Central"/>
</dbReference>
<dbReference type="GO" id="GO:0000049">
    <property type="term" value="F:tRNA binding"/>
    <property type="evidence" value="ECO:0007669"/>
    <property type="project" value="UniProtKB-UniRule"/>
</dbReference>
<dbReference type="GO" id="GO:0036265">
    <property type="term" value="P:RNA (guanine-N7)-methylation"/>
    <property type="evidence" value="ECO:0000318"/>
    <property type="project" value="GO_Central"/>
</dbReference>
<dbReference type="GO" id="GO:0030488">
    <property type="term" value="P:tRNA methylation"/>
    <property type="evidence" value="ECO:0000318"/>
    <property type="project" value="GO_Central"/>
</dbReference>
<dbReference type="CDD" id="cd02440">
    <property type="entry name" value="AdoMet_MTases"/>
    <property type="match status" value="1"/>
</dbReference>
<dbReference type="FunFam" id="3.40.50.150:FF:000060">
    <property type="entry name" value="tRNA (guanine-N(7)-)-methyltransferase"/>
    <property type="match status" value="1"/>
</dbReference>
<dbReference type="Gene3D" id="3.40.50.150">
    <property type="entry name" value="Vaccinia Virus protein VP39"/>
    <property type="match status" value="1"/>
</dbReference>
<dbReference type="HAMAP" id="MF_03055">
    <property type="entry name" value="tRNA_methyltr_TrmB_euk"/>
    <property type="match status" value="1"/>
</dbReference>
<dbReference type="InterPro" id="IPR029063">
    <property type="entry name" value="SAM-dependent_MTases_sf"/>
</dbReference>
<dbReference type="InterPro" id="IPR025763">
    <property type="entry name" value="Trm8_euk"/>
</dbReference>
<dbReference type="InterPro" id="IPR003358">
    <property type="entry name" value="tRNA_(Gua-N-7)_MeTrfase_Trmb"/>
</dbReference>
<dbReference type="NCBIfam" id="TIGR00091">
    <property type="entry name" value="tRNA (guanosine(46)-N7)-methyltransferase TrmB"/>
    <property type="match status" value="1"/>
</dbReference>
<dbReference type="PANTHER" id="PTHR23417">
    <property type="entry name" value="3-DEOXY-D-MANNO-OCTULOSONIC-ACID TRANSFERASE/TRNA GUANINE-N 7 - -METHYLTRANSFERASE"/>
    <property type="match status" value="1"/>
</dbReference>
<dbReference type="PANTHER" id="PTHR23417:SF16">
    <property type="entry name" value="TRNA (GUANINE-N(7)-)-METHYLTRANSFERASE"/>
    <property type="match status" value="1"/>
</dbReference>
<dbReference type="Pfam" id="PF02390">
    <property type="entry name" value="Methyltransf_4"/>
    <property type="match status" value="1"/>
</dbReference>
<dbReference type="SUPFAM" id="SSF53335">
    <property type="entry name" value="S-adenosyl-L-methionine-dependent methyltransferases"/>
    <property type="match status" value="1"/>
</dbReference>
<dbReference type="PROSITE" id="PS51625">
    <property type="entry name" value="SAM_MT_TRMB"/>
    <property type="match status" value="1"/>
</dbReference>
<feature type="chain" id="PRO_0000370600" description="tRNA (guanine-N(7)-)-methyltransferase">
    <location>
        <begin position="1"/>
        <end position="293"/>
    </location>
</feature>
<feature type="active site" evidence="1">
    <location>
        <position position="186"/>
    </location>
</feature>
<feature type="binding site" evidence="1">
    <location>
        <position position="105"/>
    </location>
    <ligand>
        <name>S-adenosyl-L-methionine</name>
        <dbReference type="ChEBI" id="CHEBI:59789"/>
    </ligand>
</feature>
<feature type="binding site" evidence="1">
    <location>
        <begin position="128"/>
        <end position="129"/>
    </location>
    <ligand>
        <name>S-adenosyl-L-methionine</name>
        <dbReference type="ChEBI" id="CHEBI:59789"/>
    </ligand>
</feature>
<feature type="binding site" evidence="1">
    <location>
        <begin position="163"/>
        <end position="164"/>
    </location>
    <ligand>
        <name>S-adenosyl-L-methionine</name>
        <dbReference type="ChEBI" id="CHEBI:59789"/>
    </ligand>
</feature>
<feature type="binding site" evidence="1">
    <location>
        <position position="183"/>
    </location>
    <ligand>
        <name>S-adenosyl-L-methionine</name>
        <dbReference type="ChEBI" id="CHEBI:59789"/>
    </ligand>
</feature>
<feature type="binding site" evidence="1">
    <location>
        <begin position="261"/>
        <end position="263"/>
    </location>
    <ligand>
        <name>S-adenosyl-L-methionine</name>
        <dbReference type="ChEBI" id="CHEBI:59789"/>
    </ligand>
</feature>
<accession>Q7RZC1</accession>
<accession>Q6M8Z9</accession>
<comment type="function">
    <text evidence="1">Catalyzes the formation of N(7)-methylguanine at position 46 (m7G46) in tRNA.</text>
</comment>
<comment type="catalytic activity">
    <reaction evidence="1">
        <text>guanosine(46) in tRNA + S-adenosyl-L-methionine = N(7)-methylguanosine(46) in tRNA + S-adenosyl-L-homocysteine</text>
        <dbReference type="Rhea" id="RHEA:42708"/>
        <dbReference type="Rhea" id="RHEA-COMP:10188"/>
        <dbReference type="Rhea" id="RHEA-COMP:10189"/>
        <dbReference type="ChEBI" id="CHEBI:57856"/>
        <dbReference type="ChEBI" id="CHEBI:59789"/>
        <dbReference type="ChEBI" id="CHEBI:74269"/>
        <dbReference type="ChEBI" id="CHEBI:74480"/>
        <dbReference type="EC" id="2.1.1.33"/>
    </reaction>
</comment>
<comment type="pathway">
    <text evidence="1">tRNA modification; N(7)-methylguanine-tRNA biosynthesis.</text>
</comment>
<comment type="subunit">
    <text evidence="1">Forms a complex with trm82.</text>
</comment>
<comment type="subcellular location">
    <subcellularLocation>
        <location evidence="1">Nucleus</location>
    </subcellularLocation>
</comment>
<comment type="similarity">
    <text evidence="1">Belongs to the class I-like SAM-binding methyltransferase superfamily. TrmB family.</text>
</comment>
<comment type="sequence caution" evidence="2">
    <conflict type="erroneous gene model prediction">
        <sequence resource="EMBL-CDS" id="CAF06164"/>
    </conflict>
</comment>
<protein>
    <recommendedName>
        <fullName evidence="1">tRNA (guanine-N(7)-)-methyltransferase</fullName>
        <ecNumber evidence="1">2.1.1.33</ecNumber>
    </recommendedName>
    <alternativeName>
        <fullName evidence="1">Transfer RNA methyltransferase 8</fullName>
    </alternativeName>
    <alternativeName>
        <fullName evidence="1">tRNA (guanine(46)-N(7))-methyltransferase</fullName>
    </alternativeName>
    <alternativeName>
        <fullName evidence="1">tRNA(m7G46)-methyltransferase</fullName>
    </alternativeName>
</protein>
<name>TRMB_NEUCR</name>
<proteinExistence type="inferred from homology"/>
<gene>
    <name type="primary">trm8</name>
    <name type="ORF">G17A4.290</name>
    <name type="ORF">NCU03936</name>
</gene>